<protein>
    <recommendedName>
        <fullName evidence="2">Polymerase acidic protein</fullName>
        <ecNumber evidence="2">3.1.-.-</ecNumber>
    </recommendedName>
    <alternativeName>
        <fullName evidence="2">RNA-directed RNA polymerase subunit P2</fullName>
    </alternativeName>
</protein>
<dbReference type="EC" id="3.1.-.-" evidence="2"/>
<dbReference type="EMBL" id="CY020450">
    <property type="protein sequence ID" value="ABO38358.1"/>
    <property type="molecule type" value="Viral_cRNA"/>
</dbReference>
<dbReference type="MEROPS" id="S62.001"/>
<dbReference type="Proteomes" id="UP000008213">
    <property type="component" value="Genome"/>
</dbReference>
<dbReference type="GO" id="GO:0030430">
    <property type="term" value="C:host cell cytoplasm"/>
    <property type="evidence" value="ECO:0007669"/>
    <property type="project" value="UniProtKB-SubCell"/>
</dbReference>
<dbReference type="GO" id="GO:0042025">
    <property type="term" value="C:host cell nucleus"/>
    <property type="evidence" value="ECO:0007669"/>
    <property type="project" value="UniProtKB-SubCell"/>
</dbReference>
<dbReference type="GO" id="GO:0004519">
    <property type="term" value="F:endonuclease activity"/>
    <property type="evidence" value="ECO:0007669"/>
    <property type="project" value="UniProtKB-KW"/>
</dbReference>
<dbReference type="GO" id="GO:0046872">
    <property type="term" value="F:metal ion binding"/>
    <property type="evidence" value="ECO:0007669"/>
    <property type="project" value="UniProtKB-KW"/>
</dbReference>
<dbReference type="GO" id="GO:0003723">
    <property type="term" value="F:RNA binding"/>
    <property type="evidence" value="ECO:0007669"/>
    <property type="project" value="UniProtKB-UniRule"/>
</dbReference>
<dbReference type="GO" id="GO:0075526">
    <property type="term" value="P:cap snatching"/>
    <property type="evidence" value="ECO:0007669"/>
    <property type="project" value="UniProtKB-UniRule"/>
</dbReference>
<dbReference type="GO" id="GO:0006351">
    <property type="term" value="P:DNA-templated transcription"/>
    <property type="evidence" value="ECO:0007669"/>
    <property type="project" value="UniProtKB-UniRule"/>
</dbReference>
<dbReference type="GO" id="GO:0039657">
    <property type="term" value="P:symbiont-mediated suppression of host gene expression"/>
    <property type="evidence" value="ECO:0007669"/>
    <property type="project" value="UniProtKB-KW"/>
</dbReference>
<dbReference type="GO" id="GO:0039523">
    <property type="term" value="P:symbiont-mediated suppression of host mRNA transcription via inhibition of RNA polymerase II activity"/>
    <property type="evidence" value="ECO:0007669"/>
    <property type="project" value="UniProtKB-UniRule"/>
</dbReference>
<dbReference type="GO" id="GO:0039694">
    <property type="term" value="P:viral RNA genome replication"/>
    <property type="evidence" value="ECO:0007669"/>
    <property type="project" value="InterPro"/>
</dbReference>
<dbReference type="GO" id="GO:0075523">
    <property type="term" value="P:viral translational frameshifting"/>
    <property type="evidence" value="ECO:0007669"/>
    <property type="project" value="UniProtKB-KW"/>
</dbReference>
<dbReference type="FunFam" id="3.40.91.90:FF:000001">
    <property type="entry name" value="Polymerase acidic protein"/>
    <property type="match status" value="1"/>
</dbReference>
<dbReference type="Gene3D" id="3.40.91.90">
    <property type="entry name" value="Influenza RNA-dependent RNA polymerase subunit PA, endonuclease domain"/>
    <property type="match status" value="1"/>
</dbReference>
<dbReference type="HAMAP" id="MF_04063">
    <property type="entry name" value="INFV_PA"/>
    <property type="match status" value="1"/>
</dbReference>
<dbReference type="InterPro" id="IPR037534">
    <property type="entry name" value="INFV_PA"/>
</dbReference>
<dbReference type="InterPro" id="IPR001009">
    <property type="entry name" value="PA/PA-X"/>
</dbReference>
<dbReference type="InterPro" id="IPR038372">
    <property type="entry name" value="PA/PA-X_sf"/>
</dbReference>
<dbReference type="Pfam" id="PF00603">
    <property type="entry name" value="Flu_PA"/>
    <property type="match status" value="1"/>
</dbReference>
<organismHost>
    <name type="scientific">Aves</name>
    <dbReference type="NCBI Taxonomy" id="8782"/>
</organismHost>
<organismHost>
    <name type="scientific">Homo sapiens</name>
    <name type="common">Human</name>
    <dbReference type="NCBI Taxonomy" id="9606"/>
</organismHost>
<organismHost>
    <name type="scientific">Sus scrofa</name>
    <name type="common">Pig</name>
    <dbReference type="NCBI Taxonomy" id="9823"/>
</organismHost>
<proteinExistence type="inferred from homology"/>
<evidence type="ECO:0000250" key="1">
    <source>
        <dbReference type="UniProtKB" id="P03433"/>
    </source>
</evidence>
<evidence type="ECO:0000255" key="2">
    <source>
        <dbReference type="HAMAP-Rule" id="MF_04063"/>
    </source>
</evidence>
<comment type="function">
    <text evidence="2">Plays an essential role in viral RNA transcription and replication by forming the heterotrimeric polymerase complex together with PB1 and PB2 subunits. The complex transcribes viral mRNAs by using a unique mechanism called cap-snatching. It consists in the hijacking and cleavage of host capped pre-mRNAs. These short capped RNAs are then used as primers for viral mRNAs. The PB2 subunit is responsible for the binding of the 5' cap of cellular pre-mRNAs which are subsequently cleaved after 10-13 nucleotides by the PA subunit that carries the endonuclease activity.</text>
</comment>
<comment type="cofactor">
    <cofactor evidence="2">
        <name>Mn(2+)</name>
        <dbReference type="ChEBI" id="CHEBI:29035"/>
    </cofactor>
    <text evidence="2">Binds 2 manganese ions per subunit.</text>
</comment>
<comment type="subunit">
    <text evidence="1 2">Influenza RNA polymerase is composed of three subunits: PB1, PB2 and PA. Interacts (via C-terminus) with PB1 (via N-terminus).</text>
</comment>
<comment type="subcellular location">
    <subcellularLocation>
        <location evidence="2">Host cytoplasm</location>
    </subcellularLocation>
    <subcellularLocation>
        <location evidence="2">Host nucleus</location>
    </subcellularLocation>
    <text evidence="1 2">PB1 and PA are transported in the host nucleus as a complex.</text>
</comment>
<comment type="alternative products">
    <event type="ribosomal frameshifting"/>
    <isoform>
        <id>A4GCJ3-1</id>
        <name>PA</name>
        <sequence type="displayed"/>
    </isoform>
    <isoform>
        <id>P0DJR5-1</id>
        <name>PA-X</name>
        <sequence type="external"/>
    </isoform>
</comment>
<comment type="PTM">
    <text evidence="1 2">Phosphorylated on serines and threonines by host kinases, including human casein kinase II.</text>
</comment>
<comment type="similarity">
    <text evidence="2">Belongs to the influenza viruses PA family.</text>
</comment>
<sequence length="716" mass="82725">MEDFVRQCFNPMIVELAEKTMKEYGENLKIETNKFAAICTHLEVCFMYSDFHFINEQGESTIVELGDPNALLKHRFEIIEGRDRTMAWTVVNSICNTTGAEKPKFLPDLYDYKENRFIEIGVTRREVHIYYLEKANKIKSEKTHIHIFSFTGEEMATKTDYTLDEESRARIKTRLFTIRQEMASRGLWDSFRQSERGEETIEERFEITGTMRKLADQSLPPNFSSLENFRAYVDGFEPNGYIEGKLSQMSKEVNARIEPFLKTTPRPLRLPNGPPCSQRSKFLLMDALKLSIEDPSHEGEGIPLYDAIKCMRTFFGWKEPNVVKPHEKGINPNYLLSWRQVLAELQDIENEEKIPKTKNMKKTSHLKWALGENMAPEKVDFDDCKDIGDLKQYDSDEPELRSLASWIQNEFNKACELTDSSWIELDEIGEDVAPIEHIASMRRNYFTSEVSHCRATEYIMKGVYINTALLNASCAAMDDFQLIPMISKCRTKEGRRKTNLYGFIIKGRSHLRNDTDVVNFVSMEFSLTBPRLEPHKWEKYCVLEIGDMLLRSAIGQVSRPMFLYVRTNGTSKIKMKWGMEMRRCLLQSLQQIESMIEAESSVKEKDMTKEFFENKSETWPIGESPKGVEESSIGKVCRTLLAKSVFNSLYASPQLEGFSAESRKLLLIVQALRDNLEPGTFDLGGLYEAIEECLINDPWVLLNASWFNSFLTHALR</sequence>
<accession>A4GCJ3</accession>
<feature type="chain" id="PRO_0000372997" description="Polymerase acidic protein">
    <location>
        <begin position="1"/>
        <end position="716"/>
    </location>
</feature>
<feature type="short sequence motif" description="Nuclear localization signal 1 (NLS1)" evidence="1 2">
    <location>
        <begin position="124"/>
        <end position="139"/>
    </location>
</feature>
<feature type="short sequence motif" description="Nuclear localization signal 2 (NLS2)" evidence="1 2">
    <location>
        <begin position="184"/>
        <end position="247"/>
    </location>
</feature>
<feature type="binding site" evidence="2">
    <location>
        <position position="41"/>
    </location>
    <ligand>
        <name>Mn(2+)</name>
        <dbReference type="ChEBI" id="CHEBI:29035"/>
        <label>1</label>
    </ligand>
</feature>
<feature type="binding site" evidence="2">
    <location>
        <position position="80"/>
    </location>
    <ligand>
        <name>Mn(2+)</name>
        <dbReference type="ChEBI" id="CHEBI:29035"/>
        <label>2</label>
    </ligand>
</feature>
<feature type="binding site" evidence="2">
    <location>
        <position position="108"/>
    </location>
    <ligand>
        <name>Mn(2+)</name>
        <dbReference type="ChEBI" id="CHEBI:29035"/>
        <label>1</label>
    </ligand>
</feature>
<feature type="binding site" evidence="2">
    <location>
        <position position="108"/>
    </location>
    <ligand>
        <name>Mn(2+)</name>
        <dbReference type="ChEBI" id="CHEBI:29035"/>
        <label>2</label>
    </ligand>
</feature>
<feature type="binding site" evidence="2">
    <location>
        <position position="119"/>
    </location>
    <ligand>
        <name>Mn(2+)</name>
        <dbReference type="ChEBI" id="CHEBI:29035"/>
        <label>1</label>
    </ligand>
</feature>
<feature type="binding site" evidence="2">
    <location>
        <position position="120"/>
    </location>
    <ligand>
        <name>Mn(2+)</name>
        <dbReference type="ChEBI" id="CHEBI:29035"/>
        <label>1</label>
    </ligand>
</feature>
<reference key="1">
    <citation type="submission" date="2007-03" db="EMBL/GenBank/DDBJ databases">
        <title>The NIAID influenza genome sequencing project.</title>
        <authorList>
            <person name="Ghedin E."/>
            <person name="Spiro D."/>
            <person name="Miller N."/>
            <person name="Zaborsky J."/>
            <person name="Feldblyum T."/>
            <person name="Subbu V."/>
            <person name="Shumway M."/>
            <person name="Sparenborg J."/>
            <person name="Groveman L."/>
            <person name="Halpin R."/>
            <person name="Sitz J."/>
            <person name="Koo H."/>
            <person name="Salzberg S.L."/>
            <person name="Webster R.G."/>
            <person name="Hoffmann E."/>
            <person name="Krauss S."/>
            <person name="Naeve C."/>
            <person name="Bao Y."/>
            <person name="Bolotov P."/>
            <person name="Dernovoy D."/>
            <person name="Kiryutin B."/>
            <person name="Lipman D.J."/>
            <person name="Tatusova T."/>
        </authorList>
    </citation>
    <scope>NUCLEOTIDE SEQUENCE [GENOMIC RNA]</scope>
</reference>
<reference key="2">
    <citation type="submission" date="2007-03" db="EMBL/GenBank/DDBJ databases">
        <authorList>
            <consortium name="The NIAID Influenza Genome Sequencing Consortium"/>
        </authorList>
    </citation>
    <scope>NUCLEOTIDE SEQUENCE [GENOMIC RNA]</scope>
</reference>
<organism>
    <name type="scientific">Influenza A virus (strain A/Henry/1936 H1N1)</name>
    <dbReference type="NCBI Taxonomy" id="425562"/>
    <lineage>
        <taxon>Viruses</taxon>
        <taxon>Riboviria</taxon>
        <taxon>Orthornavirae</taxon>
        <taxon>Negarnaviricota</taxon>
        <taxon>Polyploviricotina</taxon>
        <taxon>Insthoviricetes</taxon>
        <taxon>Articulavirales</taxon>
        <taxon>Orthomyxoviridae</taxon>
        <taxon>Alphainfluenzavirus</taxon>
        <taxon>Alphainfluenzavirus influenzae</taxon>
        <taxon>Influenza A virus</taxon>
    </lineage>
</organism>
<gene>
    <name evidence="2" type="primary">PA</name>
</gene>
<name>PA_I36A0</name>
<keyword id="KW-1157">Cap snatching</keyword>
<keyword id="KW-0255">Endonuclease</keyword>
<keyword id="KW-1262">Eukaryotic host gene expression shutoff by virus</keyword>
<keyword id="KW-1191">Eukaryotic host transcription shutoff by virus</keyword>
<keyword id="KW-1035">Host cytoplasm</keyword>
<keyword id="KW-1190">Host gene expression shutoff by virus</keyword>
<keyword id="KW-1048">Host nucleus</keyword>
<keyword id="KW-0945">Host-virus interaction</keyword>
<keyword id="KW-0378">Hydrolase</keyword>
<keyword id="KW-1104">Inhibition of host RNA polymerase II by virus</keyword>
<keyword id="KW-0464">Manganese</keyword>
<keyword id="KW-0479">Metal-binding</keyword>
<keyword id="KW-0540">Nuclease</keyword>
<keyword id="KW-0597">Phosphoprotein</keyword>
<keyword id="KW-0688">Ribosomal frameshifting</keyword>